<keyword id="KW-0067">ATP-binding</keyword>
<keyword id="KW-0436">Ligase</keyword>
<keyword id="KW-0460">Magnesium</keyword>
<keyword id="KW-0479">Metal-binding</keyword>
<keyword id="KW-0547">Nucleotide-binding</keyword>
<keyword id="KW-0816">Tricarboxylic acid cycle</keyword>
<accession>A8Z3S5</accession>
<proteinExistence type="inferred from homology"/>
<name>SUCC_STAAT</name>
<protein>
    <recommendedName>
        <fullName evidence="1">Succinate--CoA ligase [ADP-forming] subunit beta</fullName>
        <ecNumber evidence="1">6.2.1.5</ecNumber>
    </recommendedName>
    <alternativeName>
        <fullName evidence="1">Succinyl-CoA synthetase subunit beta</fullName>
        <shortName evidence="1">SCS-beta</shortName>
    </alternativeName>
</protein>
<comment type="function">
    <text evidence="1">Succinyl-CoA synthetase functions in the citric acid cycle (TCA), coupling the hydrolysis of succinyl-CoA to the synthesis of either ATP or GTP and thus represents the only step of substrate-level phosphorylation in the TCA. The beta subunit provides nucleotide specificity of the enzyme and binds the substrate succinate, while the binding sites for coenzyme A and phosphate are found in the alpha subunit.</text>
</comment>
<comment type="catalytic activity">
    <reaction evidence="1">
        <text>succinate + ATP + CoA = succinyl-CoA + ADP + phosphate</text>
        <dbReference type="Rhea" id="RHEA:17661"/>
        <dbReference type="ChEBI" id="CHEBI:30031"/>
        <dbReference type="ChEBI" id="CHEBI:30616"/>
        <dbReference type="ChEBI" id="CHEBI:43474"/>
        <dbReference type="ChEBI" id="CHEBI:57287"/>
        <dbReference type="ChEBI" id="CHEBI:57292"/>
        <dbReference type="ChEBI" id="CHEBI:456216"/>
        <dbReference type="EC" id="6.2.1.5"/>
    </reaction>
    <physiologicalReaction direction="right-to-left" evidence="1">
        <dbReference type="Rhea" id="RHEA:17663"/>
    </physiologicalReaction>
</comment>
<comment type="catalytic activity">
    <reaction evidence="1">
        <text>GTP + succinate + CoA = succinyl-CoA + GDP + phosphate</text>
        <dbReference type="Rhea" id="RHEA:22120"/>
        <dbReference type="ChEBI" id="CHEBI:30031"/>
        <dbReference type="ChEBI" id="CHEBI:37565"/>
        <dbReference type="ChEBI" id="CHEBI:43474"/>
        <dbReference type="ChEBI" id="CHEBI:57287"/>
        <dbReference type="ChEBI" id="CHEBI:57292"/>
        <dbReference type="ChEBI" id="CHEBI:58189"/>
    </reaction>
    <physiologicalReaction direction="right-to-left" evidence="1">
        <dbReference type="Rhea" id="RHEA:22122"/>
    </physiologicalReaction>
</comment>
<comment type="cofactor">
    <cofactor evidence="1">
        <name>Mg(2+)</name>
        <dbReference type="ChEBI" id="CHEBI:18420"/>
    </cofactor>
    <text evidence="1">Binds 1 Mg(2+) ion per subunit.</text>
</comment>
<comment type="pathway">
    <text evidence="1">Carbohydrate metabolism; tricarboxylic acid cycle; succinate from succinyl-CoA (ligase route): step 1/1.</text>
</comment>
<comment type="subunit">
    <text evidence="1">Heterotetramer of two alpha and two beta subunits.</text>
</comment>
<comment type="similarity">
    <text evidence="1">Belongs to the succinate/malate CoA ligase beta subunit family.</text>
</comment>
<sequence length="388" mass="42056">MNIHEYQGKEIFRSMGVAVPEGRVAFTAEEAVEKAKELNSDVYVVKAQIHAGGRGKAGGVKIAKSLSEVETYAKELLGKTLVTHQTGPEGKEIKRLYIEEGCAIQKEYYVGFVIDRATDQVTLMASEEGGTEIEEVAAKTPEKIFKETIDPVIGLSPFQARRIAFNINIPKESVNKAAKFLLALYNVFIEKDCSIVEINPLVTTADGDVLALDAKINFDDNALFRHKDVVELRDLEEEDPKEIEASKHDLSYIALDGDIGCMVNGAGLAMATMDTINHFGGNPANFLDAGGSATREKVTEAFKIILGDENVKGIFVNIFGGIMKCDVIAEGIVEAVKEVDLTLPLVVRLEGTNVELGKKILKDSGLAIEPAATMAEGAQKIVKLVKEA</sequence>
<feature type="chain" id="PRO_1000082248" description="Succinate--CoA ligase [ADP-forming] subunit beta">
    <location>
        <begin position="1"/>
        <end position="388"/>
    </location>
</feature>
<feature type="domain" description="ATP-grasp" evidence="1">
    <location>
        <begin position="9"/>
        <end position="244"/>
    </location>
</feature>
<feature type="binding site" evidence="1">
    <location>
        <position position="46"/>
    </location>
    <ligand>
        <name>ATP</name>
        <dbReference type="ChEBI" id="CHEBI:30616"/>
    </ligand>
</feature>
<feature type="binding site" evidence="1">
    <location>
        <begin position="53"/>
        <end position="55"/>
    </location>
    <ligand>
        <name>ATP</name>
        <dbReference type="ChEBI" id="CHEBI:30616"/>
    </ligand>
</feature>
<feature type="binding site" evidence="1">
    <location>
        <position position="99"/>
    </location>
    <ligand>
        <name>ATP</name>
        <dbReference type="ChEBI" id="CHEBI:30616"/>
    </ligand>
</feature>
<feature type="binding site" evidence="1">
    <location>
        <position position="102"/>
    </location>
    <ligand>
        <name>ATP</name>
        <dbReference type="ChEBI" id="CHEBI:30616"/>
    </ligand>
</feature>
<feature type="binding site" evidence="1">
    <location>
        <position position="107"/>
    </location>
    <ligand>
        <name>ATP</name>
        <dbReference type="ChEBI" id="CHEBI:30616"/>
    </ligand>
</feature>
<feature type="binding site" evidence="1">
    <location>
        <position position="199"/>
    </location>
    <ligand>
        <name>Mg(2+)</name>
        <dbReference type="ChEBI" id="CHEBI:18420"/>
    </ligand>
</feature>
<feature type="binding site" evidence="1">
    <location>
        <position position="213"/>
    </location>
    <ligand>
        <name>Mg(2+)</name>
        <dbReference type="ChEBI" id="CHEBI:18420"/>
    </ligand>
</feature>
<feature type="binding site" evidence="1">
    <location>
        <position position="264"/>
    </location>
    <ligand>
        <name>substrate</name>
        <note>ligand shared with subunit alpha</note>
    </ligand>
</feature>
<feature type="binding site" evidence="1">
    <location>
        <begin position="321"/>
        <end position="323"/>
    </location>
    <ligand>
        <name>substrate</name>
        <note>ligand shared with subunit alpha</note>
    </ligand>
</feature>
<gene>
    <name evidence="1" type="primary">sucC</name>
    <name type="ordered locus">USA300HOU_1176</name>
</gene>
<evidence type="ECO:0000255" key="1">
    <source>
        <dbReference type="HAMAP-Rule" id="MF_00558"/>
    </source>
</evidence>
<organism>
    <name type="scientific">Staphylococcus aureus (strain USA300 / TCH1516)</name>
    <dbReference type="NCBI Taxonomy" id="451516"/>
    <lineage>
        <taxon>Bacteria</taxon>
        <taxon>Bacillati</taxon>
        <taxon>Bacillota</taxon>
        <taxon>Bacilli</taxon>
        <taxon>Bacillales</taxon>
        <taxon>Staphylococcaceae</taxon>
        <taxon>Staphylococcus</taxon>
    </lineage>
</organism>
<dbReference type="EC" id="6.2.1.5" evidence="1"/>
<dbReference type="EMBL" id="CP000730">
    <property type="protein sequence ID" value="ABX29191.1"/>
    <property type="molecule type" value="Genomic_DNA"/>
</dbReference>
<dbReference type="RefSeq" id="WP_001020801.1">
    <property type="nucleotide sequence ID" value="NC_010079.1"/>
</dbReference>
<dbReference type="SMR" id="A8Z3S5"/>
<dbReference type="KEGG" id="sax:USA300HOU_1176"/>
<dbReference type="HOGENOM" id="CLU_037430_0_2_9"/>
<dbReference type="UniPathway" id="UPA00223">
    <property type="reaction ID" value="UER00999"/>
</dbReference>
<dbReference type="GO" id="GO:0005829">
    <property type="term" value="C:cytosol"/>
    <property type="evidence" value="ECO:0007669"/>
    <property type="project" value="TreeGrafter"/>
</dbReference>
<dbReference type="GO" id="GO:0042709">
    <property type="term" value="C:succinate-CoA ligase complex"/>
    <property type="evidence" value="ECO:0007669"/>
    <property type="project" value="TreeGrafter"/>
</dbReference>
<dbReference type="GO" id="GO:0005524">
    <property type="term" value="F:ATP binding"/>
    <property type="evidence" value="ECO:0007669"/>
    <property type="project" value="UniProtKB-UniRule"/>
</dbReference>
<dbReference type="GO" id="GO:0000287">
    <property type="term" value="F:magnesium ion binding"/>
    <property type="evidence" value="ECO:0007669"/>
    <property type="project" value="UniProtKB-UniRule"/>
</dbReference>
<dbReference type="GO" id="GO:0004775">
    <property type="term" value="F:succinate-CoA ligase (ADP-forming) activity"/>
    <property type="evidence" value="ECO:0007669"/>
    <property type="project" value="UniProtKB-UniRule"/>
</dbReference>
<dbReference type="GO" id="GO:0004776">
    <property type="term" value="F:succinate-CoA ligase (GDP-forming) activity"/>
    <property type="evidence" value="ECO:0007669"/>
    <property type="project" value="RHEA"/>
</dbReference>
<dbReference type="GO" id="GO:0006104">
    <property type="term" value="P:succinyl-CoA metabolic process"/>
    <property type="evidence" value="ECO:0007669"/>
    <property type="project" value="TreeGrafter"/>
</dbReference>
<dbReference type="GO" id="GO:0006099">
    <property type="term" value="P:tricarboxylic acid cycle"/>
    <property type="evidence" value="ECO:0007669"/>
    <property type="project" value="UniProtKB-UniRule"/>
</dbReference>
<dbReference type="FunFam" id="3.30.1490.20:FF:000002">
    <property type="entry name" value="Succinate--CoA ligase [ADP-forming] subunit beta"/>
    <property type="match status" value="1"/>
</dbReference>
<dbReference type="FunFam" id="3.30.470.20:FF:000002">
    <property type="entry name" value="Succinate--CoA ligase [ADP-forming] subunit beta"/>
    <property type="match status" value="1"/>
</dbReference>
<dbReference type="FunFam" id="3.40.50.261:FF:000001">
    <property type="entry name" value="Succinate--CoA ligase [ADP-forming] subunit beta"/>
    <property type="match status" value="1"/>
</dbReference>
<dbReference type="Gene3D" id="3.30.1490.20">
    <property type="entry name" value="ATP-grasp fold, A domain"/>
    <property type="match status" value="1"/>
</dbReference>
<dbReference type="Gene3D" id="3.30.470.20">
    <property type="entry name" value="ATP-grasp fold, B domain"/>
    <property type="match status" value="1"/>
</dbReference>
<dbReference type="Gene3D" id="3.40.50.261">
    <property type="entry name" value="Succinyl-CoA synthetase domains"/>
    <property type="match status" value="1"/>
</dbReference>
<dbReference type="HAMAP" id="MF_00558">
    <property type="entry name" value="Succ_CoA_beta"/>
    <property type="match status" value="1"/>
</dbReference>
<dbReference type="InterPro" id="IPR011761">
    <property type="entry name" value="ATP-grasp"/>
</dbReference>
<dbReference type="InterPro" id="IPR013650">
    <property type="entry name" value="ATP-grasp_succ-CoA_synth-type"/>
</dbReference>
<dbReference type="InterPro" id="IPR013815">
    <property type="entry name" value="ATP_grasp_subdomain_1"/>
</dbReference>
<dbReference type="InterPro" id="IPR017866">
    <property type="entry name" value="Succ-CoA_synthase_bsu_CS"/>
</dbReference>
<dbReference type="InterPro" id="IPR005811">
    <property type="entry name" value="SUCC_ACL_C"/>
</dbReference>
<dbReference type="InterPro" id="IPR005809">
    <property type="entry name" value="Succ_CoA_ligase-like_bsu"/>
</dbReference>
<dbReference type="InterPro" id="IPR016102">
    <property type="entry name" value="Succinyl-CoA_synth-like"/>
</dbReference>
<dbReference type="NCBIfam" id="NF001913">
    <property type="entry name" value="PRK00696.1"/>
    <property type="match status" value="1"/>
</dbReference>
<dbReference type="NCBIfam" id="TIGR01016">
    <property type="entry name" value="sucCoAbeta"/>
    <property type="match status" value="1"/>
</dbReference>
<dbReference type="PANTHER" id="PTHR11815:SF10">
    <property type="entry name" value="SUCCINATE--COA LIGASE [GDP-FORMING] SUBUNIT BETA, MITOCHONDRIAL"/>
    <property type="match status" value="1"/>
</dbReference>
<dbReference type="PANTHER" id="PTHR11815">
    <property type="entry name" value="SUCCINYL-COA SYNTHETASE BETA CHAIN"/>
    <property type="match status" value="1"/>
</dbReference>
<dbReference type="Pfam" id="PF08442">
    <property type="entry name" value="ATP-grasp_2"/>
    <property type="match status" value="1"/>
</dbReference>
<dbReference type="Pfam" id="PF00549">
    <property type="entry name" value="Ligase_CoA"/>
    <property type="match status" value="1"/>
</dbReference>
<dbReference type="PIRSF" id="PIRSF001554">
    <property type="entry name" value="SucCS_beta"/>
    <property type="match status" value="1"/>
</dbReference>
<dbReference type="SUPFAM" id="SSF56059">
    <property type="entry name" value="Glutathione synthetase ATP-binding domain-like"/>
    <property type="match status" value="1"/>
</dbReference>
<dbReference type="SUPFAM" id="SSF52210">
    <property type="entry name" value="Succinyl-CoA synthetase domains"/>
    <property type="match status" value="1"/>
</dbReference>
<dbReference type="PROSITE" id="PS50975">
    <property type="entry name" value="ATP_GRASP"/>
    <property type="match status" value="1"/>
</dbReference>
<dbReference type="PROSITE" id="PS01217">
    <property type="entry name" value="SUCCINYL_COA_LIG_3"/>
    <property type="match status" value="1"/>
</dbReference>
<reference key="1">
    <citation type="journal article" date="2007" name="BMC Microbiol.">
        <title>Subtle genetic changes enhance virulence of methicillin resistant and sensitive Staphylococcus aureus.</title>
        <authorList>
            <person name="Highlander S.K."/>
            <person name="Hulten K.G."/>
            <person name="Qin X."/>
            <person name="Jiang H."/>
            <person name="Yerrapragada S."/>
            <person name="Mason E.O. Jr."/>
            <person name="Shang Y."/>
            <person name="Williams T.M."/>
            <person name="Fortunov R.M."/>
            <person name="Liu Y."/>
            <person name="Igboeli O."/>
            <person name="Petrosino J."/>
            <person name="Tirumalai M."/>
            <person name="Uzman A."/>
            <person name="Fox G.E."/>
            <person name="Cardenas A.M."/>
            <person name="Muzny D.M."/>
            <person name="Hemphill L."/>
            <person name="Ding Y."/>
            <person name="Dugan S."/>
            <person name="Blyth P.R."/>
            <person name="Buhay C.J."/>
            <person name="Dinh H.H."/>
            <person name="Hawes A.C."/>
            <person name="Holder M."/>
            <person name="Kovar C.L."/>
            <person name="Lee S.L."/>
            <person name="Liu W."/>
            <person name="Nazareth L.V."/>
            <person name="Wang Q."/>
            <person name="Zhou J."/>
            <person name="Kaplan S.L."/>
            <person name="Weinstock G.M."/>
        </authorList>
    </citation>
    <scope>NUCLEOTIDE SEQUENCE [LARGE SCALE GENOMIC DNA]</scope>
    <source>
        <strain>USA300 / TCH1516</strain>
    </source>
</reference>